<name>GBB_NICPL</name>
<comment type="function">
    <text>Guanine nucleotide-binding proteins (G proteins) are involved as a modulator or transducer in various transmembrane signaling systems. The beta and gamma chains are required for the GTPase activity, for replacement of GDP by GTP, and for G protein-effector interaction.</text>
</comment>
<comment type="subunit">
    <text>G proteins are composed of 3 units, alpha, beta and gamma.</text>
</comment>
<comment type="subcellular location">
    <subcellularLocation>
        <location>Cell membrane</location>
    </subcellularLocation>
    <subcellularLocation>
        <location>Endoplasmic reticulum membrane</location>
    </subcellularLocation>
</comment>
<comment type="induction">
    <text>By auxin.</text>
</comment>
<comment type="similarity">
    <text evidence="1">Belongs to the WD repeat G protein beta family.</text>
</comment>
<accession>P93339</accession>
<dbReference type="EMBL" id="Y09513">
    <property type="protein sequence ID" value="CAA70704.1"/>
    <property type="molecule type" value="mRNA"/>
</dbReference>
<dbReference type="PIR" id="T16985">
    <property type="entry name" value="T16985"/>
</dbReference>
<dbReference type="GO" id="GO:0005789">
    <property type="term" value="C:endoplasmic reticulum membrane"/>
    <property type="evidence" value="ECO:0007669"/>
    <property type="project" value="UniProtKB-SubCell"/>
</dbReference>
<dbReference type="GO" id="GO:0005886">
    <property type="term" value="C:plasma membrane"/>
    <property type="evidence" value="ECO:0007669"/>
    <property type="project" value="UniProtKB-SubCell"/>
</dbReference>
<dbReference type="GO" id="GO:0007165">
    <property type="term" value="P:signal transduction"/>
    <property type="evidence" value="ECO:0007669"/>
    <property type="project" value="UniProtKB-KW"/>
</dbReference>
<dbReference type="CDD" id="cd00200">
    <property type="entry name" value="WD40"/>
    <property type="match status" value="1"/>
</dbReference>
<dbReference type="FunFam" id="2.130.10.10:FF:000580">
    <property type="entry name" value="Guanine nucleotide-binding protein subunit beta"/>
    <property type="match status" value="1"/>
</dbReference>
<dbReference type="Gene3D" id="2.130.10.10">
    <property type="entry name" value="YVTN repeat-like/Quinoprotein amine dehydrogenase"/>
    <property type="match status" value="1"/>
</dbReference>
<dbReference type="InterPro" id="IPR020472">
    <property type="entry name" value="G-protein_beta_WD-40_rep"/>
</dbReference>
<dbReference type="InterPro" id="IPR001632">
    <property type="entry name" value="Gprotein_B"/>
</dbReference>
<dbReference type="InterPro" id="IPR016346">
    <property type="entry name" value="Guanine_nucleotide-bd_bsu"/>
</dbReference>
<dbReference type="InterPro" id="IPR015943">
    <property type="entry name" value="WD40/YVTN_repeat-like_dom_sf"/>
</dbReference>
<dbReference type="InterPro" id="IPR019775">
    <property type="entry name" value="WD40_repeat_CS"/>
</dbReference>
<dbReference type="InterPro" id="IPR036322">
    <property type="entry name" value="WD40_repeat_dom_sf"/>
</dbReference>
<dbReference type="InterPro" id="IPR001680">
    <property type="entry name" value="WD40_rpt"/>
</dbReference>
<dbReference type="PANTHER" id="PTHR19850">
    <property type="entry name" value="GUANINE NUCLEOTIDE-BINDING PROTEIN BETA G PROTEIN BETA"/>
    <property type="match status" value="1"/>
</dbReference>
<dbReference type="Pfam" id="PF25391">
    <property type="entry name" value="WD40_Gbeta"/>
    <property type="match status" value="1"/>
</dbReference>
<dbReference type="PIRSF" id="PIRSF002394">
    <property type="entry name" value="GN-bd_beta"/>
    <property type="match status" value="1"/>
</dbReference>
<dbReference type="PRINTS" id="PR00319">
    <property type="entry name" value="GPROTEINB"/>
</dbReference>
<dbReference type="PRINTS" id="PR00320">
    <property type="entry name" value="GPROTEINBRPT"/>
</dbReference>
<dbReference type="SMART" id="SM00320">
    <property type="entry name" value="WD40"/>
    <property type="match status" value="7"/>
</dbReference>
<dbReference type="SUPFAM" id="SSF50978">
    <property type="entry name" value="WD40 repeat-like"/>
    <property type="match status" value="1"/>
</dbReference>
<dbReference type="PROSITE" id="PS00678">
    <property type="entry name" value="WD_REPEATS_1"/>
    <property type="match status" value="2"/>
</dbReference>
<dbReference type="PROSITE" id="PS50082">
    <property type="entry name" value="WD_REPEATS_2"/>
    <property type="match status" value="5"/>
</dbReference>
<dbReference type="PROSITE" id="PS50294">
    <property type="entry name" value="WD_REPEATS_REGION"/>
    <property type="match status" value="1"/>
</dbReference>
<proteinExistence type="evidence at transcript level"/>
<feature type="chain" id="PRO_0000127724" description="Guanine nucleotide-binding protein subunit beta">
    <location>
        <begin position="1"/>
        <end position="377"/>
    </location>
</feature>
<feature type="repeat" description="WD 1">
    <location>
        <begin position="63"/>
        <end position="93"/>
    </location>
</feature>
<feature type="repeat" description="WD 2">
    <location>
        <begin position="105"/>
        <end position="135"/>
    </location>
</feature>
<feature type="repeat" description="WD 3">
    <location>
        <begin position="154"/>
        <end position="185"/>
    </location>
</feature>
<feature type="repeat" description="WD 4">
    <location>
        <begin position="202"/>
        <end position="233"/>
    </location>
</feature>
<feature type="repeat" description="WD 5">
    <location>
        <begin position="246"/>
        <end position="276"/>
    </location>
</feature>
<feature type="repeat" description="WD 6">
    <location>
        <begin position="293"/>
        <end position="323"/>
    </location>
</feature>
<feature type="repeat" description="WD 7">
    <location>
        <begin position="339"/>
        <end position="369"/>
    </location>
</feature>
<protein>
    <recommendedName>
        <fullName>Guanine nucleotide-binding protein subunit beta</fullName>
    </recommendedName>
    <alternativeName>
        <fullName>NpGPB1</fullName>
    </alternativeName>
</protein>
<organism>
    <name type="scientific">Nicotiana plumbaginifolia</name>
    <name type="common">Leadwort-leaved tobacco</name>
    <name type="synonym">Tex-Mex tobacco</name>
    <dbReference type="NCBI Taxonomy" id="4092"/>
    <lineage>
        <taxon>Eukaryota</taxon>
        <taxon>Viridiplantae</taxon>
        <taxon>Streptophyta</taxon>
        <taxon>Embryophyta</taxon>
        <taxon>Tracheophyta</taxon>
        <taxon>Spermatophyta</taxon>
        <taxon>Magnoliopsida</taxon>
        <taxon>eudicotyledons</taxon>
        <taxon>Gunneridae</taxon>
        <taxon>Pentapetalae</taxon>
        <taxon>asterids</taxon>
        <taxon>lamiids</taxon>
        <taxon>Solanales</taxon>
        <taxon>Solanaceae</taxon>
        <taxon>Nicotianoideae</taxon>
        <taxon>Nicotianeae</taxon>
        <taxon>Nicotiana</taxon>
    </lineage>
</organism>
<reference key="1">
    <citation type="journal article" date="2000" name="Biochim. Biophys. Acta">
        <title>Molecular characterization of cDNAs encoding G protein alpha and beta subunits and study of their temporal and spatial expression patterns in Nicotiana plumbaginifolia Viv.</title>
        <authorList>
            <person name="Kaydamov C."/>
            <person name="Tewes A."/>
            <person name="Adler K."/>
            <person name="Manteuffel R."/>
        </authorList>
    </citation>
    <scope>NUCLEOTIDE SEQUENCE [MRNA]</scope>
</reference>
<keyword id="KW-1003">Cell membrane</keyword>
<keyword id="KW-0256">Endoplasmic reticulum</keyword>
<keyword id="KW-0472">Membrane</keyword>
<keyword id="KW-0677">Repeat</keyword>
<keyword id="KW-0807">Transducer</keyword>
<keyword id="KW-0853">WD repeat</keyword>
<sequence>MSVTELKERHMAATQTVNDLREKLKQKRLQLLDTDVSGYARSQGKTPVTFGPTDLVCCRILQGHTGKVYSLDWTPEKNRIVSASQDGRLIVWNALTSQKTHAIKLPCAWVMTCAFSPSGHSVACGGLDSVCSIFNLNSPIDKDGNHPVSRMLSGHKGYVSSCQYVPDEDTHLITSSGDQTCVLWDITTGLRTSVFGGEFQFGHTADVQSVSISSSNPRLFVSGSCDTTARLWDTRVASRAQRTFYCHEGDVNTVKFFPDGNRFGTGSEDGTCRLFDIRTGHQLQVYYQPHGDGDIPHVTSMAFSISGRLLFVRYSNGDCYVWDTLLAKVVLNLGAVQNSHEGXISCLGLSADGXXLCTGSWDTNLKIWAFGGHRSVI</sequence>
<evidence type="ECO:0000305" key="1"/>